<gene>
    <name evidence="3" type="primary">VMA21</name>
</gene>
<proteinExistence type="inferred from homology"/>
<reference key="1">
    <citation type="submission" date="2007-02" db="EMBL/GenBank/DDBJ databases">
        <authorList>
            <consortium name="NIH - Mammalian Gene Collection (MGC) project"/>
        </authorList>
    </citation>
    <scope>NUCLEOTIDE SEQUENCE [LARGE SCALE MRNA]</scope>
    <source>
        <strain>Hereford</strain>
        <tissue>Fetal pons</tissue>
    </source>
</reference>
<feature type="chain" id="PRO_0000331498" description="Vacuolar ATPase assembly integral membrane protein VMA21">
    <location>
        <begin position="1"/>
        <end position="101"/>
    </location>
</feature>
<feature type="topological domain" description="Cytoplasmic" evidence="3">
    <location>
        <begin position="1"/>
        <end position="25"/>
    </location>
</feature>
<feature type="transmembrane region" description="Helical" evidence="3">
    <location>
        <begin position="26"/>
        <end position="46"/>
    </location>
</feature>
<feature type="topological domain" description="Lumenal" evidence="3">
    <location>
        <begin position="47"/>
        <end position="65"/>
    </location>
</feature>
<feature type="transmembrane region" description="Helical" evidence="3">
    <location>
        <begin position="66"/>
        <end position="86"/>
    </location>
</feature>
<feature type="topological domain" description="Cytoplasmic" evidence="3">
    <location>
        <begin position="87"/>
        <end position="101"/>
    </location>
</feature>
<dbReference type="EMBL" id="BC133287">
    <property type="protein sequence ID" value="AAI33288.1"/>
    <property type="molecule type" value="mRNA"/>
</dbReference>
<dbReference type="RefSeq" id="NP_001075085.1">
    <property type="nucleotide sequence ID" value="NM_001081616.2"/>
</dbReference>
<dbReference type="SMR" id="A2VDK9"/>
<dbReference type="FunCoup" id="A2VDK9">
    <property type="interactions" value="2189"/>
</dbReference>
<dbReference type="STRING" id="9913.ENSBTAP00000008268"/>
<dbReference type="PaxDb" id="9913-ENSBTAP00000008268"/>
<dbReference type="Ensembl" id="ENSBTAT00000008268.4">
    <property type="protein sequence ID" value="ENSBTAP00000008268.3"/>
    <property type="gene ID" value="ENSBTAG00000006296.6"/>
</dbReference>
<dbReference type="GeneID" id="613674"/>
<dbReference type="KEGG" id="bta:613674"/>
<dbReference type="CTD" id="203547"/>
<dbReference type="VEuPathDB" id="HostDB:ENSBTAG00000006296"/>
<dbReference type="VGNC" id="VGNC:36804">
    <property type="gene designation" value="VMA21"/>
</dbReference>
<dbReference type="eggNOG" id="KOG4783">
    <property type="taxonomic scope" value="Eukaryota"/>
</dbReference>
<dbReference type="GeneTree" id="ENSGT00390000017980"/>
<dbReference type="HOGENOM" id="CLU_143588_1_0_1"/>
<dbReference type="InParanoid" id="A2VDK9"/>
<dbReference type="OMA" id="PYFRGNE"/>
<dbReference type="OrthoDB" id="160405at2759"/>
<dbReference type="TreeFam" id="TF314021"/>
<dbReference type="Proteomes" id="UP000009136">
    <property type="component" value="Chromosome X"/>
</dbReference>
<dbReference type="Bgee" id="ENSBTAG00000006296">
    <property type="expression patterns" value="Expressed in caput epididymis and 104 other cell types or tissues"/>
</dbReference>
<dbReference type="GO" id="GO:0005789">
    <property type="term" value="C:endoplasmic reticulum membrane"/>
    <property type="evidence" value="ECO:0000318"/>
    <property type="project" value="GO_Central"/>
</dbReference>
<dbReference type="GO" id="GO:0033116">
    <property type="term" value="C:endoplasmic reticulum-Golgi intermediate compartment membrane"/>
    <property type="evidence" value="ECO:0007669"/>
    <property type="project" value="UniProtKB-SubCell"/>
</dbReference>
<dbReference type="GO" id="GO:0012507">
    <property type="term" value="C:ER to Golgi transport vesicle membrane"/>
    <property type="evidence" value="ECO:0007669"/>
    <property type="project" value="UniProtKB-SubCell"/>
</dbReference>
<dbReference type="GO" id="GO:0070072">
    <property type="term" value="P:vacuolar proton-transporting V-type ATPase complex assembly"/>
    <property type="evidence" value="ECO:0000318"/>
    <property type="project" value="GO_Central"/>
</dbReference>
<dbReference type="HAMAP" id="MF_03058">
    <property type="entry name" value="VMA21"/>
    <property type="match status" value="1"/>
</dbReference>
<dbReference type="InterPro" id="IPR019013">
    <property type="entry name" value="Vma21"/>
</dbReference>
<dbReference type="PANTHER" id="PTHR31792">
    <property type="entry name" value="VACUOLAR ATPASE ASSEMBLY INTEGRAL MEMBRANE PROTEIN VMA21"/>
    <property type="match status" value="1"/>
</dbReference>
<dbReference type="PANTHER" id="PTHR31792:SF3">
    <property type="entry name" value="VACUOLAR ATPASE ASSEMBLY INTEGRAL MEMBRANE PROTEIN VMA21"/>
    <property type="match status" value="1"/>
</dbReference>
<dbReference type="Pfam" id="PF09446">
    <property type="entry name" value="VMA21"/>
    <property type="match status" value="1"/>
</dbReference>
<name>VMA21_BOVIN</name>
<organism>
    <name type="scientific">Bos taurus</name>
    <name type="common">Bovine</name>
    <dbReference type="NCBI Taxonomy" id="9913"/>
    <lineage>
        <taxon>Eukaryota</taxon>
        <taxon>Metazoa</taxon>
        <taxon>Chordata</taxon>
        <taxon>Craniata</taxon>
        <taxon>Vertebrata</taxon>
        <taxon>Euteleostomi</taxon>
        <taxon>Mammalia</taxon>
        <taxon>Eutheria</taxon>
        <taxon>Laurasiatheria</taxon>
        <taxon>Artiodactyla</taxon>
        <taxon>Ruminantia</taxon>
        <taxon>Pecora</taxon>
        <taxon>Bovidae</taxon>
        <taxon>Bovinae</taxon>
        <taxon>Bos</taxon>
    </lineage>
</organism>
<sequence>MERLDKAALNALQPSDFRNESSLASTLKTLLFFTALMITVPIGLYFTTKSYVFEGAFGMSNRDSYFYAAIVAVVAVHVVLALFVYVAWNEGSRQWREGKQD</sequence>
<protein>
    <recommendedName>
        <fullName evidence="3">Vacuolar ATPase assembly integral membrane protein VMA21</fullName>
    </recommendedName>
</protein>
<comment type="function">
    <text evidence="2">Required for the assembly of the V0 complex of the vacuolar ATPase (V-ATPase) in the endoplasmic reticulum.</text>
</comment>
<comment type="subunit">
    <text evidence="1 3">Associates with the V0 complex of the vacuolar ATPase (V-ATPase) (By similarity). Interacts with ATP6AP2 (By similarity).</text>
</comment>
<comment type="subcellular location">
    <subcellularLocation>
        <location evidence="3">Endoplasmic reticulum membrane</location>
        <topology evidence="3">Multi-pass membrane protein</topology>
    </subcellularLocation>
    <subcellularLocation>
        <location evidence="3">Endoplasmic reticulum-Golgi intermediate compartment membrane</location>
        <topology evidence="3">Multi-pass membrane protein</topology>
    </subcellularLocation>
    <subcellularLocation>
        <location evidence="3">Cytoplasmic vesicle</location>
        <location evidence="3">COPII-coated vesicle membrane</location>
        <topology evidence="3">Multi-pass membrane protein</topology>
    </subcellularLocation>
</comment>
<comment type="similarity">
    <text evidence="3">Belongs to the VMA21 family.</text>
</comment>
<keyword id="KW-0968">Cytoplasmic vesicle</keyword>
<keyword id="KW-0256">Endoplasmic reticulum</keyword>
<keyword id="KW-0472">Membrane</keyword>
<keyword id="KW-1185">Reference proteome</keyword>
<keyword id="KW-0812">Transmembrane</keyword>
<keyword id="KW-1133">Transmembrane helix</keyword>
<evidence type="ECO:0000250" key="1">
    <source>
        <dbReference type="UniProtKB" id="Q3ZAQ7"/>
    </source>
</evidence>
<evidence type="ECO:0000250" key="2">
    <source>
        <dbReference type="UniProtKB" id="Q78T54"/>
    </source>
</evidence>
<evidence type="ECO:0000255" key="3">
    <source>
        <dbReference type="HAMAP-Rule" id="MF_03058"/>
    </source>
</evidence>
<accession>A2VDK9</accession>